<feature type="chain" id="PRO_0000242001" description="Arginine--tRNA ligase">
    <location>
        <begin position="1"/>
        <end position="530"/>
    </location>
</feature>
<feature type="short sequence motif" description="'HIGH' region">
    <location>
        <begin position="113"/>
        <end position="123"/>
    </location>
</feature>
<feature type="helix" evidence="2">
    <location>
        <begin position="79"/>
        <end position="91"/>
    </location>
</feature>
<feature type="helix" evidence="2">
    <location>
        <begin position="93"/>
        <end position="95"/>
    </location>
</feature>
<feature type="strand" evidence="2">
    <location>
        <begin position="105"/>
        <end position="109"/>
    </location>
</feature>
<feature type="strand" evidence="2">
    <location>
        <begin position="115"/>
        <end position="118"/>
    </location>
</feature>
<feature type="helix" evidence="2">
    <location>
        <begin position="121"/>
        <end position="123"/>
    </location>
</feature>
<feature type="helix" evidence="2">
    <location>
        <begin position="124"/>
        <end position="139"/>
    </location>
</feature>
<feature type="strand" evidence="2">
    <location>
        <begin position="143"/>
        <end position="150"/>
    </location>
</feature>
<feature type="helix" evidence="2">
    <location>
        <begin position="154"/>
        <end position="171"/>
    </location>
</feature>
<feature type="helix" evidence="2">
    <location>
        <begin position="187"/>
        <end position="200"/>
    </location>
</feature>
<feature type="helix" evidence="2">
    <location>
        <begin position="202"/>
        <end position="204"/>
    </location>
</feature>
<feature type="helix" evidence="2">
    <location>
        <begin position="207"/>
        <end position="209"/>
    </location>
</feature>
<feature type="helix" evidence="2">
    <location>
        <begin position="210"/>
        <end position="231"/>
    </location>
</feature>
<feature type="strand" evidence="2">
    <location>
        <begin position="239"/>
        <end position="241"/>
    </location>
</feature>
<feature type="helix" evidence="2">
    <location>
        <begin position="242"/>
        <end position="245"/>
    </location>
</feature>
<feature type="helix" evidence="2">
    <location>
        <begin position="249"/>
        <end position="258"/>
    </location>
</feature>
<feature type="strand" evidence="2">
    <location>
        <begin position="262"/>
        <end position="265"/>
    </location>
</feature>
<feature type="strand" evidence="2">
    <location>
        <begin position="268"/>
        <end position="271"/>
    </location>
</feature>
<feature type="helix" evidence="2">
    <location>
        <begin position="273"/>
        <end position="276"/>
    </location>
</feature>
<feature type="strand" evidence="2">
    <location>
        <begin position="282"/>
        <end position="285"/>
    </location>
</feature>
<feature type="helix" evidence="2">
    <location>
        <begin position="293"/>
        <end position="305"/>
    </location>
</feature>
<feature type="strand" evidence="2">
    <location>
        <begin position="310"/>
        <end position="317"/>
    </location>
</feature>
<feature type="helix" evidence="2">
    <location>
        <begin position="318"/>
        <end position="323"/>
    </location>
</feature>
<feature type="helix" evidence="2">
    <location>
        <begin position="324"/>
        <end position="332"/>
    </location>
</feature>
<feature type="turn" evidence="2">
    <location>
        <begin position="333"/>
        <end position="335"/>
    </location>
</feature>
<feature type="helix" evidence="2">
    <location>
        <begin position="338"/>
        <end position="340"/>
    </location>
</feature>
<feature type="strand" evidence="2">
    <location>
        <begin position="341"/>
        <end position="346"/>
    </location>
</feature>
<feature type="strand" evidence="2">
    <location>
        <begin position="349"/>
        <end position="353"/>
    </location>
</feature>
<feature type="helix" evidence="2">
    <location>
        <begin position="370"/>
        <end position="377"/>
    </location>
</feature>
<feature type="helix" evidence="2">
    <location>
        <begin position="379"/>
        <end position="385"/>
    </location>
</feature>
<feature type="strand" evidence="2">
    <location>
        <begin position="395"/>
        <end position="398"/>
    </location>
</feature>
<feature type="helix" evidence="2">
    <location>
        <begin position="399"/>
        <end position="403"/>
    </location>
</feature>
<feature type="helix" evidence="2">
    <location>
        <begin position="410"/>
        <end position="427"/>
    </location>
</feature>
<feature type="turn" evidence="2">
    <location>
        <begin position="432"/>
        <end position="434"/>
    </location>
</feature>
<feature type="helix" evidence="2">
    <location>
        <begin position="445"/>
        <end position="455"/>
    </location>
</feature>
<feature type="helix" evidence="2">
    <location>
        <begin position="457"/>
        <end position="467"/>
    </location>
</feature>
<feature type="helix" evidence="2">
    <location>
        <begin position="472"/>
        <end position="490"/>
    </location>
</feature>
<feature type="helix" evidence="2">
    <location>
        <begin position="499"/>
        <end position="519"/>
    </location>
</feature>
<name>SYR_CAMJE</name>
<protein>
    <recommendedName>
        <fullName evidence="1">Arginine--tRNA ligase</fullName>
        <ecNumber evidence="1">6.1.1.19</ecNumber>
    </recommendedName>
    <alternativeName>
        <fullName evidence="1">Arginyl-tRNA synthetase</fullName>
        <shortName evidence="1">ArgRS</shortName>
    </alternativeName>
</protein>
<proteinExistence type="evidence at protein level"/>
<evidence type="ECO:0000255" key="1">
    <source>
        <dbReference type="HAMAP-Rule" id="MF_00123"/>
    </source>
</evidence>
<evidence type="ECO:0007829" key="2">
    <source>
        <dbReference type="PDB" id="3FNR"/>
    </source>
</evidence>
<sequence length="530" mass="60190">MKSIIFNEIKKILECDFALENPKDKNLAHFATPLAFSLAKELKKSPMLIASDLASKFQNHDCFESVEAVNGYLNFRISKTFLNELANQALTNPNDFTKGEKKQESFLLEYVSANPTGPLHIGHARGAVFGDTLTRLARHLGYKFNTEYYVNDAGNQIYLLGLSILLSVKESILHENVEYPEQYYKGEYIVDLAKEAFEKFGKEFFSEENIPSLADWAKDKMLVLIKQNLEQAKIKIDSYVSERSYYDALNATLESLKEHKGIYEQEGKIWLASSQKGDEKDRVIIREDGRGTYLAADIVYHKDKMSRGYGKCINIWGADHHGYIPRMKAAMEFLGFDSNNLEIILAQMVSLLKDGEPYKMSKRAGNFILMSDVVDEIGSDALRYIFLSKKCDTHLEFDISDLQKEDSSNPVYYINYAHARIHQVFAKAGKKIDDVMKADLQSLNQDGVNLLFEALNLKAVLNDAFEARALQKIPDYLKNLAANFHKFYNENKVVGSANENDLLKLFSLVALSIKTAFSLMGIEAKNKMEH</sequence>
<comment type="catalytic activity">
    <reaction evidence="1">
        <text>tRNA(Arg) + L-arginine + ATP = L-arginyl-tRNA(Arg) + AMP + diphosphate</text>
        <dbReference type="Rhea" id="RHEA:20301"/>
        <dbReference type="Rhea" id="RHEA-COMP:9658"/>
        <dbReference type="Rhea" id="RHEA-COMP:9673"/>
        <dbReference type="ChEBI" id="CHEBI:30616"/>
        <dbReference type="ChEBI" id="CHEBI:32682"/>
        <dbReference type="ChEBI" id="CHEBI:33019"/>
        <dbReference type="ChEBI" id="CHEBI:78442"/>
        <dbReference type="ChEBI" id="CHEBI:78513"/>
        <dbReference type="ChEBI" id="CHEBI:456215"/>
        <dbReference type="EC" id="6.1.1.19"/>
    </reaction>
</comment>
<comment type="subunit">
    <text evidence="1">Monomer.</text>
</comment>
<comment type="subcellular location">
    <subcellularLocation>
        <location evidence="1">Cytoplasm</location>
    </subcellularLocation>
</comment>
<comment type="similarity">
    <text evidence="1">Belongs to the class-I aminoacyl-tRNA synthetase family.</text>
</comment>
<reference key="1">
    <citation type="journal article" date="2000" name="Nature">
        <title>The genome sequence of the food-borne pathogen Campylobacter jejuni reveals hypervariable sequences.</title>
        <authorList>
            <person name="Parkhill J."/>
            <person name="Wren B.W."/>
            <person name="Mungall K.L."/>
            <person name="Ketley J.M."/>
            <person name="Churcher C.M."/>
            <person name="Basham D."/>
            <person name="Chillingworth T."/>
            <person name="Davies R.M."/>
            <person name="Feltwell T."/>
            <person name="Holroyd S."/>
            <person name="Jagels K."/>
            <person name="Karlyshev A.V."/>
            <person name="Moule S."/>
            <person name="Pallen M.J."/>
            <person name="Penn C.W."/>
            <person name="Quail M.A."/>
            <person name="Rajandream M.A."/>
            <person name="Rutherford K.M."/>
            <person name="van Vliet A.H.M."/>
            <person name="Whitehead S."/>
            <person name="Barrell B.G."/>
        </authorList>
    </citation>
    <scope>NUCLEOTIDE SEQUENCE [LARGE SCALE GENOMIC DNA]</scope>
    <source>
        <strain>ATCC 700819 / NCTC 11168</strain>
    </source>
</reference>
<gene>
    <name evidence="1" type="primary">argS</name>
    <name type="ordered locus">Cj1175c</name>
</gene>
<keyword id="KW-0002">3D-structure</keyword>
<keyword id="KW-0030">Aminoacyl-tRNA synthetase</keyword>
<keyword id="KW-0067">ATP-binding</keyword>
<keyword id="KW-0963">Cytoplasm</keyword>
<keyword id="KW-0436">Ligase</keyword>
<keyword id="KW-0547">Nucleotide-binding</keyword>
<keyword id="KW-0648">Protein biosynthesis</keyword>
<keyword id="KW-1185">Reference proteome</keyword>
<organism>
    <name type="scientific">Campylobacter jejuni subsp. jejuni serotype O:2 (strain ATCC 700819 / NCTC 11168)</name>
    <dbReference type="NCBI Taxonomy" id="192222"/>
    <lineage>
        <taxon>Bacteria</taxon>
        <taxon>Pseudomonadati</taxon>
        <taxon>Campylobacterota</taxon>
        <taxon>Epsilonproteobacteria</taxon>
        <taxon>Campylobacterales</taxon>
        <taxon>Campylobacteraceae</taxon>
        <taxon>Campylobacter</taxon>
    </lineage>
</organism>
<accession>Q9PNC0</accession>
<accession>Q0P981</accession>
<dbReference type="EC" id="6.1.1.19" evidence="1"/>
<dbReference type="EMBL" id="AL111168">
    <property type="protein sequence ID" value="CAL35290.1"/>
    <property type="molecule type" value="Genomic_DNA"/>
</dbReference>
<dbReference type="PIR" id="A81323">
    <property type="entry name" value="A81323"/>
</dbReference>
<dbReference type="RefSeq" id="WP_010891916.1">
    <property type="nucleotide sequence ID" value="NZ_SZUC01000001.1"/>
</dbReference>
<dbReference type="RefSeq" id="YP_002344566.1">
    <property type="nucleotide sequence ID" value="NC_002163.1"/>
</dbReference>
<dbReference type="PDB" id="3FNR">
    <property type="method" value="X-ray"/>
    <property type="resolution" value="2.20 A"/>
    <property type="chains" value="A=77-530"/>
</dbReference>
<dbReference type="PDBsum" id="3FNR"/>
<dbReference type="SMR" id="Q9PNC0"/>
<dbReference type="IntAct" id="Q9PNC0">
    <property type="interactions" value="3"/>
</dbReference>
<dbReference type="STRING" id="192222.Cj1175c"/>
<dbReference type="PaxDb" id="192222-Cj1175c"/>
<dbReference type="DNASU" id="905465"/>
<dbReference type="EnsemblBacteria" id="CAL35290">
    <property type="protein sequence ID" value="CAL35290"/>
    <property type="gene ID" value="Cj1175c"/>
</dbReference>
<dbReference type="GeneID" id="905465"/>
<dbReference type="KEGG" id="cje:Cj1175c"/>
<dbReference type="PATRIC" id="fig|192222.6.peg.1156"/>
<dbReference type="eggNOG" id="COG0018">
    <property type="taxonomic scope" value="Bacteria"/>
</dbReference>
<dbReference type="HOGENOM" id="CLU_006406_0_1_7"/>
<dbReference type="OrthoDB" id="9803211at2"/>
<dbReference type="EvolutionaryTrace" id="Q9PNC0"/>
<dbReference type="Proteomes" id="UP000000799">
    <property type="component" value="Chromosome"/>
</dbReference>
<dbReference type="GO" id="GO:0005737">
    <property type="term" value="C:cytoplasm"/>
    <property type="evidence" value="ECO:0007669"/>
    <property type="project" value="UniProtKB-SubCell"/>
</dbReference>
<dbReference type="GO" id="GO:0004814">
    <property type="term" value="F:arginine-tRNA ligase activity"/>
    <property type="evidence" value="ECO:0007669"/>
    <property type="project" value="UniProtKB-UniRule"/>
</dbReference>
<dbReference type="GO" id="GO:0005524">
    <property type="term" value="F:ATP binding"/>
    <property type="evidence" value="ECO:0007669"/>
    <property type="project" value="UniProtKB-UniRule"/>
</dbReference>
<dbReference type="GO" id="GO:0006420">
    <property type="term" value="P:arginyl-tRNA aminoacylation"/>
    <property type="evidence" value="ECO:0007669"/>
    <property type="project" value="UniProtKB-UniRule"/>
</dbReference>
<dbReference type="CDD" id="cd07956">
    <property type="entry name" value="Anticodon_Ia_Arg"/>
    <property type="match status" value="1"/>
</dbReference>
<dbReference type="CDD" id="cd00671">
    <property type="entry name" value="ArgRS_core"/>
    <property type="match status" value="1"/>
</dbReference>
<dbReference type="FunFam" id="3.40.50.620:FF:000062">
    <property type="entry name" value="Arginine--tRNA ligase"/>
    <property type="match status" value="1"/>
</dbReference>
<dbReference type="Gene3D" id="3.30.1360.70">
    <property type="entry name" value="Arginyl tRNA synthetase N-terminal domain"/>
    <property type="match status" value="1"/>
</dbReference>
<dbReference type="Gene3D" id="3.40.50.620">
    <property type="entry name" value="HUPs"/>
    <property type="match status" value="1"/>
</dbReference>
<dbReference type="Gene3D" id="1.10.730.10">
    <property type="entry name" value="Isoleucyl-tRNA Synthetase, Domain 1"/>
    <property type="match status" value="1"/>
</dbReference>
<dbReference type="HAMAP" id="MF_00123">
    <property type="entry name" value="Arg_tRNA_synth"/>
    <property type="match status" value="1"/>
</dbReference>
<dbReference type="InterPro" id="IPR001412">
    <property type="entry name" value="aa-tRNA-synth_I_CS"/>
</dbReference>
<dbReference type="InterPro" id="IPR001278">
    <property type="entry name" value="Arg-tRNA-ligase"/>
</dbReference>
<dbReference type="InterPro" id="IPR005148">
    <property type="entry name" value="Arg-tRNA-synth_N"/>
</dbReference>
<dbReference type="InterPro" id="IPR036695">
    <property type="entry name" value="Arg-tRNA-synth_N_sf"/>
</dbReference>
<dbReference type="InterPro" id="IPR035684">
    <property type="entry name" value="ArgRS_core"/>
</dbReference>
<dbReference type="InterPro" id="IPR008909">
    <property type="entry name" value="DALR_anticod-bd"/>
</dbReference>
<dbReference type="InterPro" id="IPR014729">
    <property type="entry name" value="Rossmann-like_a/b/a_fold"/>
</dbReference>
<dbReference type="InterPro" id="IPR009080">
    <property type="entry name" value="tRNAsynth_Ia_anticodon-bd"/>
</dbReference>
<dbReference type="NCBIfam" id="TIGR00456">
    <property type="entry name" value="argS"/>
    <property type="match status" value="1"/>
</dbReference>
<dbReference type="PANTHER" id="PTHR11956:SF5">
    <property type="entry name" value="ARGININE--TRNA LIGASE, CYTOPLASMIC"/>
    <property type="match status" value="1"/>
</dbReference>
<dbReference type="PANTHER" id="PTHR11956">
    <property type="entry name" value="ARGINYL-TRNA SYNTHETASE"/>
    <property type="match status" value="1"/>
</dbReference>
<dbReference type="Pfam" id="PF03485">
    <property type="entry name" value="Arg_tRNA_synt_N"/>
    <property type="match status" value="1"/>
</dbReference>
<dbReference type="Pfam" id="PF05746">
    <property type="entry name" value="DALR_1"/>
    <property type="match status" value="1"/>
</dbReference>
<dbReference type="Pfam" id="PF00750">
    <property type="entry name" value="tRNA-synt_1d"/>
    <property type="match status" value="1"/>
</dbReference>
<dbReference type="PRINTS" id="PR01038">
    <property type="entry name" value="TRNASYNTHARG"/>
</dbReference>
<dbReference type="SMART" id="SM01016">
    <property type="entry name" value="Arg_tRNA_synt_N"/>
    <property type="match status" value="1"/>
</dbReference>
<dbReference type="SMART" id="SM00836">
    <property type="entry name" value="DALR_1"/>
    <property type="match status" value="1"/>
</dbReference>
<dbReference type="SUPFAM" id="SSF47323">
    <property type="entry name" value="Anticodon-binding domain of a subclass of class I aminoacyl-tRNA synthetases"/>
    <property type="match status" value="1"/>
</dbReference>
<dbReference type="SUPFAM" id="SSF55190">
    <property type="entry name" value="Arginyl-tRNA synthetase (ArgRS), N-terminal 'additional' domain"/>
    <property type="match status" value="1"/>
</dbReference>
<dbReference type="SUPFAM" id="SSF52374">
    <property type="entry name" value="Nucleotidylyl transferase"/>
    <property type="match status" value="1"/>
</dbReference>
<dbReference type="PROSITE" id="PS00178">
    <property type="entry name" value="AA_TRNA_LIGASE_I"/>
    <property type="match status" value="1"/>
</dbReference>